<protein>
    <recommendedName>
        <fullName evidence="1">Methylenetetrahydrofolate--tRNA-(uracil-5-)-methyltransferase TrmFO</fullName>
        <ecNumber evidence="1">2.1.1.74</ecNumber>
    </recommendedName>
    <alternativeName>
        <fullName evidence="1">Folate-dependent tRNA (uracil-5-)-methyltransferase</fullName>
    </alternativeName>
    <alternativeName>
        <fullName evidence="1">Folate-dependent tRNA(M-5-U54)-methyltransferase</fullName>
    </alternativeName>
</protein>
<evidence type="ECO:0000255" key="1">
    <source>
        <dbReference type="HAMAP-Rule" id="MF_01037"/>
    </source>
</evidence>
<evidence type="ECO:0000305" key="2"/>
<feature type="chain" id="PRO_0000117239" description="Methylenetetrahydrofolate--tRNA-(uracil-5-)-methyltransferase TrmFO">
    <location>
        <begin position="1"/>
        <end position="466"/>
    </location>
</feature>
<feature type="binding site" evidence="1">
    <location>
        <begin position="14"/>
        <end position="19"/>
    </location>
    <ligand>
        <name>FAD</name>
        <dbReference type="ChEBI" id="CHEBI:57692"/>
    </ligand>
</feature>
<sequence>MSNNTDLSPVHVIGGGLAGSEAAWQIAQAGVPVVLHEMRPVRGTDAHKTEQLAELVCSNSFRSDDAETNAVGVLHAEMRLAGSLIMACADAHQVPAGGALAVDREGFSQAVTARLEAHPLITIEREEITGLPPTEWGTTIIATGPLTAPSLAEAIAAETDADALAFFDAIAPIIHFDSINMDVCWFQSRYDKVGPGGTGKDYINCPMDKEQYEAFVAALIEGDKTDFKEWEGTPYFDGCLPIEVMAERGPETLRHGPMKPMGLTNAHNPTVKPYAVVQLRQDNALGTLYNMVGFQTKLKYGSQTGIFKMIPGLENAEFARLGGLHRNTYLNSPVLLDNVLRLKSRQTLRFAGQVTGCEGYVESSAIGLLAGRFTAAEKLSQAAVPPPPTTAFGALLGHITGGHIVTDDEPGKRSFQPMNVNFGLFPPVDVPKPEGKRLRGKEKTIAKKRALSARALADCRNWLSLY</sequence>
<reference key="1">
    <citation type="journal article" date="2002" name="Proc. Natl. Acad. Sci. U.S.A.">
        <title>The genome sequence of the facultative intracellular pathogen Brucella melitensis.</title>
        <authorList>
            <person name="DelVecchio V.G."/>
            <person name="Kapatral V."/>
            <person name="Redkar R.J."/>
            <person name="Patra G."/>
            <person name="Mujer C."/>
            <person name="Los T."/>
            <person name="Ivanova N."/>
            <person name="Anderson I."/>
            <person name="Bhattacharyya A."/>
            <person name="Lykidis A."/>
            <person name="Reznik G."/>
            <person name="Jablonski L."/>
            <person name="Larsen N."/>
            <person name="D'Souza M."/>
            <person name="Bernal A."/>
            <person name="Mazur M."/>
            <person name="Goltsman E."/>
            <person name="Selkov E."/>
            <person name="Elzer P.H."/>
            <person name="Hagius S."/>
            <person name="O'Callaghan D."/>
            <person name="Letesson J.-J."/>
            <person name="Haselkorn R."/>
            <person name="Kyrpides N.C."/>
            <person name="Overbeek R."/>
        </authorList>
    </citation>
    <scope>NUCLEOTIDE SEQUENCE [LARGE SCALE GENOMIC DNA]</scope>
    <source>
        <strain>ATCC 23456 / CCUG 17765 / NCTC 10094 / 16M</strain>
    </source>
</reference>
<keyword id="KW-0963">Cytoplasm</keyword>
<keyword id="KW-0274">FAD</keyword>
<keyword id="KW-0285">Flavoprotein</keyword>
<keyword id="KW-0489">Methyltransferase</keyword>
<keyword id="KW-0520">NAD</keyword>
<keyword id="KW-0521">NADP</keyword>
<keyword id="KW-0808">Transferase</keyword>
<keyword id="KW-0819">tRNA processing</keyword>
<name>TRMFO_BRUME</name>
<organism>
    <name type="scientific">Brucella melitensis biotype 1 (strain ATCC 23456 / CCUG 17765 / NCTC 10094 / 16M)</name>
    <dbReference type="NCBI Taxonomy" id="224914"/>
    <lineage>
        <taxon>Bacteria</taxon>
        <taxon>Pseudomonadati</taxon>
        <taxon>Pseudomonadota</taxon>
        <taxon>Alphaproteobacteria</taxon>
        <taxon>Hyphomicrobiales</taxon>
        <taxon>Brucellaceae</taxon>
        <taxon>Brucella/Ochrobactrum group</taxon>
        <taxon>Brucella</taxon>
    </lineage>
</organism>
<dbReference type="EC" id="2.1.1.74" evidence="1"/>
<dbReference type="EMBL" id="AE008917">
    <property type="protein sequence ID" value="AAL52254.1"/>
    <property type="status" value="ALT_INIT"/>
    <property type="molecule type" value="Genomic_DNA"/>
</dbReference>
<dbReference type="PIR" id="AC3386">
    <property type="entry name" value="AC3386"/>
</dbReference>
<dbReference type="RefSeq" id="WP_002967605.1">
    <property type="nucleotide sequence ID" value="NZ_GG703778.1"/>
</dbReference>
<dbReference type="SMR" id="P64232"/>
<dbReference type="GeneID" id="45124322"/>
<dbReference type="KEGG" id="bme:BMEI1073"/>
<dbReference type="KEGG" id="bmel:DK63_340"/>
<dbReference type="PATRIC" id="fig|224914.52.peg.353"/>
<dbReference type="eggNOG" id="COG1206">
    <property type="taxonomic scope" value="Bacteria"/>
</dbReference>
<dbReference type="Proteomes" id="UP000000419">
    <property type="component" value="Chromosome I"/>
</dbReference>
<dbReference type="GO" id="GO:0005829">
    <property type="term" value="C:cytosol"/>
    <property type="evidence" value="ECO:0007669"/>
    <property type="project" value="TreeGrafter"/>
</dbReference>
<dbReference type="GO" id="GO:0050660">
    <property type="term" value="F:flavin adenine dinucleotide binding"/>
    <property type="evidence" value="ECO:0007669"/>
    <property type="project" value="UniProtKB-UniRule"/>
</dbReference>
<dbReference type="GO" id="GO:0047151">
    <property type="term" value="F:tRNA (uracil(54)-C5)-methyltransferase activity, 5,10-methylenetetrahydrofolate-dependent"/>
    <property type="evidence" value="ECO:0007669"/>
    <property type="project" value="UniProtKB-UniRule"/>
</dbReference>
<dbReference type="GO" id="GO:0030488">
    <property type="term" value="P:tRNA methylation"/>
    <property type="evidence" value="ECO:0007669"/>
    <property type="project" value="TreeGrafter"/>
</dbReference>
<dbReference type="GO" id="GO:0002098">
    <property type="term" value="P:tRNA wobble uridine modification"/>
    <property type="evidence" value="ECO:0007669"/>
    <property type="project" value="TreeGrafter"/>
</dbReference>
<dbReference type="Gene3D" id="3.50.50.60">
    <property type="entry name" value="FAD/NAD(P)-binding domain"/>
    <property type="match status" value="2"/>
</dbReference>
<dbReference type="HAMAP" id="MF_01037">
    <property type="entry name" value="TrmFO"/>
    <property type="match status" value="1"/>
</dbReference>
<dbReference type="InterPro" id="IPR036188">
    <property type="entry name" value="FAD/NAD-bd_sf"/>
</dbReference>
<dbReference type="InterPro" id="IPR002218">
    <property type="entry name" value="MnmG-rel"/>
</dbReference>
<dbReference type="InterPro" id="IPR020595">
    <property type="entry name" value="MnmG-rel_CS"/>
</dbReference>
<dbReference type="InterPro" id="IPR040131">
    <property type="entry name" value="MnmG_N"/>
</dbReference>
<dbReference type="InterPro" id="IPR004417">
    <property type="entry name" value="TrmFO"/>
</dbReference>
<dbReference type="NCBIfam" id="TIGR00137">
    <property type="entry name" value="gid_trmFO"/>
    <property type="match status" value="1"/>
</dbReference>
<dbReference type="NCBIfam" id="NF003739">
    <property type="entry name" value="PRK05335.1"/>
    <property type="match status" value="1"/>
</dbReference>
<dbReference type="PANTHER" id="PTHR11806">
    <property type="entry name" value="GLUCOSE INHIBITED DIVISION PROTEIN A"/>
    <property type="match status" value="1"/>
</dbReference>
<dbReference type="PANTHER" id="PTHR11806:SF2">
    <property type="entry name" value="METHYLENETETRAHYDROFOLATE--TRNA-(URACIL-5-)-METHYLTRANSFERASE TRMFO"/>
    <property type="match status" value="1"/>
</dbReference>
<dbReference type="Pfam" id="PF01134">
    <property type="entry name" value="GIDA"/>
    <property type="match status" value="1"/>
</dbReference>
<dbReference type="SUPFAM" id="SSF51905">
    <property type="entry name" value="FAD/NAD(P)-binding domain"/>
    <property type="match status" value="1"/>
</dbReference>
<dbReference type="PROSITE" id="PS01281">
    <property type="entry name" value="GIDA_2"/>
    <property type="match status" value="1"/>
</dbReference>
<accession>P64232</accession>
<accession>Q8YGT4</accession>
<gene>
    <name evidence="1" type="primary">trmFO</name>
    <name type="synonym">gid</name>
    <name type="ordered locus">BMEI1073</name>
</gene>
<proteinExistence type="inferred from homology"/>
<comment type="function">
    <text evidence="1">Catalyzes the folate-dependent formation of 5-methyl-uridine at position 54 (M-5-U54) in all tRNAs.</text>
</comment>
<comment type="catalytic activity">
    <reaction evidence="1">
        <text>uridine(54) in tRNA + (6R)-5,10-methylene-5,6,7,8-tetrahydrofolate + NADH + H(+) = 5-methyluridine(54) in tRNA + (6S)-5,6,7,8-tetrahydrofolate + NAD(+)</text>
        <dbReference type="Rhea" id="RHEA:16873"/>
        <dbReference type="Rhea" id="RHEA-COMP:10167"/>
        <dbReference type="Rhea" id="RHEA-COMP:10193"/>
        <dbReference type="ChEBI" id="CHEBI:15378"/>
        <dbReference type="ChEBI" id="CHEBI:15636"/>
        <dbReference type="ChEBI" id="CHEBI:57453"/>
        <dbReference type="ChEBI" id="CHEBI:57540"/>
        <dbReference type="ChEBI" id="CHEBI:57945"/>
        <dbReference type="ChEBI" id="CHEBI:65315"/>
        <dbReference type="ChEBI" id="CHEBI:74447"/>
        <dbReference type="EC" id="2.1.1.74"/>
    </reaction>
</comment>
<comment type="catalytic activity">
    <reaction evidence="1">
        <text>uridine(54) in tRNA + (6R)-5,10-methylene-5,6,7,8-tetrahydrofolate + NADPH + H(+) = 5-methyluridine(54) in tRNA + (6S)-5,6,7,8-tetrahydrofolate + NADP(+)</text>
        <dbReference type="Rhea" id="RHEA:62372"/>
        <dbReference type="Rhea" id="RHEA-COMP:10167"/>
        <dbReference type="Rhea" id="RHEA-COMP:10193"/>
        <dbReference type="ChEBI" id="CHEBI:15378"/>
        <dbReference type="ChEBI" id="CHEBI:15636"/>
        <dbReference type="ChEBI" id="CHEBI:57453"/>
        <dbReference type="ChEBI" id="CHEBI:57783"/>
        <dbReference type="ChEBI" id="CHEBI:58349"/>
        <dbReference type="ChEBI" id="CHEBI:65315"/>
        <dbReference type="ChEBI" id="CHEBI:74447"/>
        <dbReference type="EC" id="2.1.1.74"/>
    </reaction>
</comment>
<comment type="cofactor">
    <cofactor evidence="1">
        <name>FAD</name>
        <dbReference type="ChEBI" id="CHEBI:57692"/>
    </cofactor>
</comment>
<comment type="subcellular location">
    <subcellularLocation>
        <location evidence="1">Cytoplasm</location>
    </subcellularLocation>
</comment>
<comment type="similarity">
    <text evidence="1">Belongs to the MnmG family. TrmFO subfamily.</text>
</comment>
<comment type="sequence caution" evidence="2">
    <conflict type="erroneous initiation">
        <sequence resource="EMBL-CDS" id="AAL52254"/>
    </conflict>
</comment>